<reference key="1">
    <citation type="submission" date="2006-01" db="EMBL/GenBank/DDBJ databases">
        <authorList>
            <consortium name="NIH - Mammalian Gene Collection (MGC) project"/>
        </authorList>
    </citation>
    <scope>NUCLEOTIDE SEQUENCE [LARGE SCALE MRNA]</scope>
    <source>
        <strain>Hereford</strain>
        <tissue>Testis</tissue>
    </source>
</reference>
<name>APC13_BOVIN</name>
<feature type="chain" id="PRO_0000253979" description="Anaphase-promoting complex subunit 13">
    <location>
        <begin position="1"/>
        <end position="74"/>
    </location>
</feature>
<feature type="region of interest" description="Disordered" evidence="2">
    <location>
        <begin position="33"/>
        <end position="53"/>
    </location>
</feature>
<feature type="helix" evidence="4">
    <location>
        <begin position="9"/>
        <end position="15"/>
    </location>
</feature>
<feature type="helix" evidence="4">
    <location>
        <begin position="18"/>
        <end position="21"/>
    </location>
</feature>
<feature type="strand" evidence="4">
    <location>
        <begin position="34"/>
        <end position="36"/>
    </location>
</feature>
<feature type="helix" evidence="4">
    <location>
        <begin position="50"/>
        <end position="55"/>
    </location>
</feature>
<gene>
    <name type="primary">ANAPC13</name>
</gene>
<keyword id="KW-0002">3D-structure</keyword>
<keyword id="KW-0131">Cell cycle</keyword>
<keyword id="KW-0132">Cell division</keyword>
<keyword id="KW-0498">Mitosis</keyword>
<keyword id="KW-0539">Nucleus</keyword>
<keyword id="KW-1185">Reference proteome</keyword>
<keyword id="KW-0833">Ubl conjugation pathway</keyword>
<sequence>MDSEVQRDGRILDLIDDAWREDKLPYEDVAIPLNELPEPEQDNGGTTESVKEQEMKWTDLALQYLHENVPPIGN</sequence>
<protein>
    <recommendedName>
        <fullName>Anaphase-promoting complex subunit 13</fullName>
        <shortName>APC13</shortName>
    </recommendedName>
    <alternativeName>
        <fullName>Cyclosome subunit 13</fullName>
    </alternativeName>
</protein>
<organism>
    <name type="scientific">Bos taurus</name>
    <name type="common">Bovine</name>
    <dbReference type="NCBI Taxonomy" id="9913"/>
    <lineage>
        <taxon>Eukaryota</taxon>
        <taxon>Metazoa</taxon>
        <taxon>Chordata</taxon>
        <taxon>Craniata</taxon>
        <taxon>Vertebrata</taxon>
        <taxon>Euteleostomi</taxon>
        <taxon>Mammalia</taxon>
        <taxon>Eutheria</taxon>
        <taxon>Laurasiatheria</taxon>
        <taxon>Artiodactyla</taxon>
        <taxon>Ruminantia</taxon>
        <taxon>Pecora</taxon>
        <taxon>Bovidae</taxon>
        <taxon>Bovinae</taxon>
        <taxon>Bos</taxon>
    </lineage>
</organism>
<proteinExistence type="evidence at protein level"/>
<comment type="function">
    <text evidence="1">Component of the anaphase promoting complex/cyclosome (APC/C), a cell cycle-regulated E3 ubiquitin ligase that controls progression through mitosis and the G1 phase of the cell cycle. The APC/C complex acts by mediating ubiquitination and subsequent degradation of target proteins: it mainly mediates the formation of 'Lys-11'-linked polyubiquitin chains and, to a lower extent, the formation of 'Lys-48'- and 'Lys-63'-linked polyubiquitin chains. The APC/C complex catalyzes assembly of branched 'Lys-11'-/'Lys-48'-linked branched ubiquitin chains on target proteins.</text>
</comment>
<comment type="pathway">
    <text evidence="1">Protein modification; protein ubiquitination.</text>
</comment>
<comment type="subunit">
    <text evidence="1">The mammalian APC/C is composed at least of 14 distinct subunits ANAPC1, ANAPC2, CDC27/APC3, ANAPC4, ANAPC5, CDC16/APC6, ANAPC7, CDC23/APC8, ANAPC10, ANAPC11, CDC26/APC12, ANAPC13, ANAPC15 and ANAPC16 that assemble into a complex of at least 19 chains with a combined molecular mass of around 1.2 MDa; APC/C interacts with FZR1 and FBXO5.</text>
</comment>
<comment type="subcellular location">
    <subcellularLocation>
        <location evidence="3">Nucleus</location>
    </subcellularLocation>
</comment>
<comment type="similarity">
    <text evidence="3">Belongs to the APC13 family.</text>
</comment>
<accession>Q2NKV2</accession>
<evidence type="ECO:0000250" key="1">
    <source>
        <dbReference type="UniProtKB" id="Q9BS18"/>
    </source>
</evidence>
<evidence type="ECO:0000256" key="2">
    <source>
        <dbReference type="SAM" id="MobiDB-lite"/>
    </source>
</evidence>
<evidence type="ECO:0000305" key="3"/>
<evidence type="ECO:0007829" key="4">
    <source>
        <dbReference type="PDB" id="5G05"/>
    </source>
</evidence>
<dbReference type="EMBL" id="BC111620">
    <property type="protein sequence ID" value="AAI11621.1"/>
    <property type="molecule type" value="mRNA"/>
</dbReference>
<dbReference type="RefSeq" id="NP_001106700.1">
    <property type="nucleotide sequence ID" value="NM_001113229.2"/>
</dbReference>
<dbReference type="RefSeq" id="NP_001106705.1">
    <property type="nucleotide sequence ID" value="NM_001113234.2"/>
</dbReference>
<dbReference type="RefSeq" id="XP_005201988.1">
    <property type="nucleotide sequence ID" value="XM_005201931.5"/>
</dbReference>
<dbReference type="RefSeq" id="XP_005201989.1">
    <property type="nucleotide sequence ID" value="XM_005201932.5"/>
</dbReference>
<dbReference type="RefSeq" id="XP_005201991.1">
    <property type="nucleotide sequence ID" value="XM_005201934.5"/>
</dbReference>
<dbReference type="RefSeq" id="XP_059742390.1">
    <property type="nucleotide sequence ID" value="XM_059886407.1"/>
</dbReference>
<dbReference type="PDB" id="5A31">
    <property type="method" value="EM"/>
    <property type="resolution" value="4.30 A"/>
    <property type="chains" value="M=1-74"/>
</dbReference>
<dbReference type="PDB" id="5G05">
    <property type="method" value="EM"/>
    <property type="resolution" value="3.40 A"/>
    <property type="chains" value="M=1-74"/>
</dbReference>
<dbReference type="PDBsum" id="5A31"/>
<dbReference type="PDBsum" id="5G05"/>
<dbReference type="EMDB" id="EMD-2925"/>
<dbReference type="SMR" id="Q2NKV2"/>
<dbReference type="DIP" id="DIP-61975N"/>
<dbReference type="FunCoup" id="Q2NKV2">
    <property type="interactions" value="1349"/>
</dbReference>
<dbReference type="STRING" id="9913.ENSBTAP00000019228"/>
<dbReference type="PaxDb" id="9913-ENSBTAP00000019228"/>
<dbReference type="Ensembl" id="ENSBTAT00000019228.5">
    <property type="protein sequence ID" value="ENSBTAP00000019228.4"/>
    <property type="gene ID" value="ENSBTAG00000014461.6"/>
</dbReference>
<dbReference type="GeneID" id="614347"/>
<dbReference type="KEGG" id="bta:614347"/>
<dbReference type="CTD" id="25847"/>
<dbReference type="VEuPathDB" id="HostDB:ENSBTAG00000014461"/>
<dbReference type="VGNC" id="VGNC:25881">
    <property type="gene designation" value="ANAPC13"/>
</dbReference>
<dbReference type="eggNOG" id="ENOG502S4J1">
    <property type="taxonomic scope" value="Eukaryota"/>
</dbReference>
<dbReference type="GeneTree" id="ENSGT00390000008673"/>
<dbReference type="HOGENOM" id="CLU_199969_0_0_1"/>
<dbReference type="InParanoid" id="Q2NKV2"/>
<dbReference type="OMA" id="PHDDIAV"/>
<dbReference type="OrthoDB" id="25675at2759"/>
<dbReference type="TreeFam" id="TF105448"/>
<dbReference type="Reactome" id="R-BTA-983168">
    <property type="pathway name" value="Antigen processing: Ubiquitination &amp; Proteasome degradation"/>
</dbReference>
<dbReference type="UniPathway" id="UPA00143"/>
<dbReference type="Proteomes" id="UP000009136">
    <property type="component" value="Chromosome 1"/>
</dbReference>
<dbReference type="Bgee" id="ENSBTAG00000014461">
    <property type="expression patterns" value="Expressed in oocyte and 107 other cell types or tissues"/>
</dbReference>
<dbReference type="GO" id="GO:0005680">
    <property type="term" value="C:anaphase-promoting complex"/>
    <property type="evidence" value="ECO:0000250"/>
    <property type="project" value="UniProtKB"/>
</dbReference>
<dbReference type="GO" id="GO:0031145">
    <property type="term" value="P:anaphase-promoting complex-dependent catabolic process"/>
    <property type="evidence" value="ECO:0000250"/>
    <property type="project" value="UniProtKB"/>
</dbReference>
<dbReference type="GO" id="GO:0051301">
    <property type="term" value="P:cell division"/>
    <property type="evidence" value="ECO:0007669"/>
    <property type="project" value="UniProtKB-KW"/>
</dbReference>
<dbReference type="GO" id="GO:0141198">
    <property type="term" value="P:protein branched polyubiquitination"/>
    <property type="evidence" value="ECO:0000250"/>
    <property type="project" value="UniProtKB"/>
</dbReference>
<dbReference type="GO" id="GO:0070979">
    <property type="term" value="P:protein K11-linked ubiquitination"/>
    <property type="evidence" value="ECO:0000250"/>
    <property type="project" value="UniProtKB"/>
</dbReference>
<dbReference type="GO" id="GO:0070936">
    <property type="term" value="P:protein K48-linked ubiquitination"/>
    <property type="evidence" value="ECO:0000250"/>
    <property type="project" value="UniProtKB"/>
</dbReference>
<dbReference type="InterPro" id="IPR008401">
    <property type="entry name" value="Apc13"/>
</dbReference>
<dbReference type="PANTHER" id="PTHR28672">
    <property type="entry name" value="ANAPHASE-PROMOTING COMPLEX SUBUNIT 13"/>
    <property type="match status" value="1"/>
</dbReference>
<dbReference type="PANTHER" id="PTHR28672:SF1">
    <property type="entry name" value="ANAPHASE-PROMOTING COMPLEX SUBUNIT 13"/>
    <property type="match status" value="1"/>
</dbReference>
<dbReference type="Pfam" id="PF05839">
    <property type="entry name" value="Apc13p"/>
    <property type="match status" value="1"/>
</dbReference>